<comment type="function">
    <text evidence="1">Multifunctional regulator of fatty acid metabolism.</text>
</comment>
<comment type="subunit">
    <text evidence="1">Homodimer.</text>
</comment>
<comment type="subcellular location">
    <subcellularLocation>
        <location evidence="1">Cytoplasm</location>
    </subcellularLocation>
</comment>
<gene>
    <name evidence="1" type="primary">fadR</name>
    <name type="ordered locus">VP2071</name>
</gene>
<organism>
    <name type="scientific">Vibrio parahaemolyticus serotype O3:K6 (strain RIMD 2210633)</name>
    <dbReference type="NCBI Taxonomy" id="223926"/>
    <lineage>
        <taxon>Bacteria</taxon>
        <taxon>Pseudomonadati</taxon>
        <taxon>Pseudomonadota</taxon>
        <taxon>Gammaproteobacteria</taxon>
        <taxon>Vibrionales</taxon>
        <taxon>Vibrionaceae</taxon>
        <taxon>Vibrio</taxon>
    </lineage>
</organism>
<feature type="chain" id="PRO_0000050637" description="Fatty acid metabolism regulator protein">
    <location>
        <begin position="1"/>
        <end position="279"/>
    </location>
</feature>
<feature type="domain" description="HTH gntR-type" evidence="1">
    <location>
        <begin position="6"/>
        <end position="74"/>
    </location>
</feature>
<feature type="DNA-binding region" description="H-T-H motif" evidence="1">
    <location>
        <begin position="34"/>
        <end position="53"/>
    </location>
</feature>
<protein>
    <recommendedName>
        <fullName evidence="1">Fatty acid metabolism regulator protein</fullName>
    </recommendedName>
</protein>
<keyword id="KW-0010">Activator</keyword>
<keyword id="KW-0963">Cytoplasm</keyword>
<keyword id="KW-0238">DNA-binding</keyword>
<keyword id="KW-0276">Fatty acid metabolism</keyword>
<keyword id="KW-0443">Lipid metabolism</keyword>
<keyword id="KW-0678">Repressor</keyword>
<keyword id="KW-0804">Transcription</keyword>
<keyword id="KW-0805">Transcription regulation</keyword>
<dbReference type="EMBL" id="BA000031">
    <property type="protein sequence ID" value="BAC60334.1"/>
    <property type="molecule type" value="Genomic_DNA"/>
</dbReference>
<dbReference type="RefSeq" id="NP_798450.1">
    <property type="nucleotide sequence ID" value="NC_004603.1"/>
</dbReference>
<dbReference type="RefSeq" id="WP_005461531.1">
    <property type="nucleotide sequence ID" value="NC_004603.1"/>
</dbReference>
<dbReference type="SMR" id="Q87N05"/>
<dbReference type="GeneID" id="1189582"/>
<dbReference type="KEGG" id="vpa:VP2071"/>
<dbReference type="PATRIC" id="fig|223926.6.peg.1981"/>
<dbReference type="eggNOG" id="COG2186">
    <property type="taxonomic scope" value="Bacteria"/>
</dbReference>
<dbReference type="HOGENOM" id="CLU_017584_9_4_6"/>
<dbReference type="Proteomes" id="UP000002493">
    <property type="component" value="Chromosome 1"/>
</dbReference>
<dbReference type="GO" id="GO:0005737">
    <property type="term" value="C:cytoplasm"/>
    <property type="evidence" value="ECO:0007669"/>
    <property type="project" value="UniProtKB-SubCell"/>
</dbReference>
<dbReference type="GO" id="GO:0003677">
    <property type="term" value="F:DNA binding"/>
    <property type="evidence" value="ECO:0007669"/>
    <property type="project" value="UniProtKB-KW"/>
</dbReference>
<dbReference type="GO" id="GO:0003700">
    <property type="term" value="F:DNA-binding transcription factor activity"/>
    <property type="evidence" value="ECO:0007669"/>
    <property type="project" value="UniProtKB-UniRule"/>
</dbReference>
<dbReference type="GO" id="GO:0000062">
    <property type="term" value="F:fatty-acyl-CoA binding"/>
    <property type="evidence" value="ECO:0007669"/>
    <property type="project" value="InterPro"/>
</dbReference>
<dbReference type="GO" id="GO:0006631">
    <property type="term" value="P:fatty acid metabolic process"/>
    <property type="evidence" value="ECO:0007669"/>
    <property type="project" value="UniProtKB-KW"/>
</dbReference>
<dbReference type="GO" id="GO:0019217">
    <property type="term" value="P:regulation of fatty acid metabolic process"/>
    <property type="evidence" value="ECO:0007669"/>
    <property type="project" value="UniProtKB-UniRule"/>
</dbReference>
<dbReference type="CDD" id="cd07377">
    <property type="entry name" value="WHTH_GntR"/>
    <property type="match status" value="1"/>
</dbReference>
<dbReference type="Gene3D" id="1.20.120.530">
    <property type="entry name" value="GntR ligand-binding domain-like"/>
    <property type="match status" value="1"/>
</dbReference>
<dbReference type="Gene3D" id="1.10.10.10">
    <property type="entry name" value="Winged helix-like DNA-binding domain superfamily/Winged helix DNA-binding domain"/>
    <property type="match status" value="1"/>
</dbReference>
<dbReference type="HAMAP" id="MF_00696">
    <property type="entry name" value="HTH_FadR"/>
    <property type="match status" value="1"/>
</dbReference>
<dbReference type="InterPro" id="IPR014178">
    <property type="entry name" value="FA-response_TF_FadR"/>
</dbReference>
<dbReference type="InterPro" id="IPR028374">
    <property type="entry name" value="FadR_C"/>
</dbReference>
<dbReference type="InterPro" id="IPR008920">
    <property type="entry name" value="TF_FadR/GntR_C"/>
</dbReference>
<dbReference type="InterPro" id="IPR000524">
    <property type="entry name" value="Tscrpt_reg_HTH_GntR"/>
</dbReference>
<dbReference type="InterPro" id="IPR036388">
    <property type="entry name" value="WH-like_DNA-bd_sf"/>
</dbReference>
<dbReference type="InterPro" id="IPR036390">
    <property type="entry name" value="WH_DNA-bd_sf"/>
</dbReference>
<dbReference type="NCBIfam" id="TIGR02812">
    <property type="entry name" value="fadR_gamma"/>
    <property type="match status" value="1"/>
</dbReference>
<dbReference type="NCBIfam" id="NF003444">
    <property type="entry name" value="PRK04984.1"/>
    <property type="match status" value="1"/>
</dbReference>
<dbReference type="PANTHER" id="PTHR43537:SF52">
    <property type="entry name" value="FATTY ACID METABOLISM REGULATOR PROTEIN"/>
    <property type="match status" value="1"/>
</dbReference>
<dbReference type="PANTHER" id="PTHR43537">
    <property type="entry name" value="TRANSCRIPTIONAL REGULATOR, GNTR FAMILY"/>
    <property type="match status" value="1"/>
</dbReference>
<dbReference type="Pfam" id="PF07840">
    <property type="entry name" value="FadR_C"/>
    <property type="match status" value="1"/>
</dbReference>
<dbReference type="Pfam" id="PF00392">
    <property type="entry name" value="GntR"/>
    <property type="match status" value="1"/>
</dbReference>
<dbReference type="PRINTS" id="PR00035">
    <property type="entry name" value="HTHGNTR"/>
</dbReference>
<dbReference type="SMART" id="SM00345">
    <property type="entry name" value="HTH_GNTR"/>
    <property type="match status" value="1"/>
</dbReference>
<dbReference type="SUPFAM" id="SSF48008">
    <property type="entry name" value="GntR ligand-binding domain-like"/>
    <property type="match status" value="1"/>
</dbReference>
<dbReference type="SUPFAM" id="SSF46785">
    <property type="entry name" value="Winged helix' DNA-binding domain"/>
    <property type="match status" value="1"/>
</dbReference>
<dbReference type="PROSITE" id="PS50949">
    <property type="entry name" value="HTH_GNTR"/>
    <property type="match status" value="1"/>
</dbReference>
<sequence>MVIKAKSPAGFAEKYIIESIWNGRFPPGSILPAERELSELIGVTRTTLREVLQRLARDGWLTIQHGKPTKVNQFMETSGLHILDTLMTLDVDNATNIVEDLLAARTNISPIFMRYAFKANKENSERTIKNVIESCEALVNASSWDDFIASSPYADKVLQSVKEDNEKDEAKRQEILIAKTFNFYDYMLFQRLAFHSGNQIYGLIFNGLKKLYDRVGSYYFSNPASRDLALRFYRQLLETCETGQREQLPVVIRHYGMESAQIWNEMKKQLPTNFTEDDS</sequence>
<reference key="1">
    <citation type="journal article" date="2003" name="Lancet">
        <title>Genome sequence of Vibrio parahaemolyticus: a pathogenic mechanism distinct from that of V. cholerae.</title>
        <authorList>
            <person name="Makino K."/>
            <person name="Oshima K."/>
            <person name="Kurokawa K."/>
            <person name="Yokoyama K."/>
            <person name="Uda T."/>
            <person name="Tagomori K."/>
            <person name="Iijima Y."/>
            <person name="Najima M."/>
            <person name="Nakano M."/>
            <person name="Yamashita A."/>
            <person name="Kubota Y."/>
            <person name="Kimura S."/>
            <person name="Yasunaga T."/>
            <person name="Honda T."/>
            <person name="Shinagawa H."/>
            <person name="Hattori M."/>
            <person name="Iida T."/>
        </authorList>
    </citation>
    <scope>NUCLEOTIDE SEQUENCE [LARGE SCALE GENOMIC DNA]</scope>
    <source>
        <strain>RIMD 2210633</strain>
    </source>
</reference>
<evidence type="ECO:0000255" key="1">
    <source>
        <dbReference type="HAMAP-Rule" id="MF_00696"/>
    </source>
</evidence>
<accession>Q87N05</accession>
<proteinExistence type="inferred from homology"/>
<name>FADR_VIBPA</name>